<geneLocation type="plasmid">
    <name>IncP-alpha RP4</name>
</geneLocation>
<evidence type="ECO:0000269" key="1">
    <source>
    </source>
</evidence>
<evidence type="ECO:0000305" key="2"/>
<gene>
    <name type="primary">traM</name>
</gene>
<protein>
    <recommendedName>
        <fullName>Protein TraM</fullName>
    </recommendedName>
</protein>
<comment type="similarity">
    <text evidence="2">To plasmid R751 TraM.</text>
</comment>
<proteinExistence type="evidence at protein level"/>
<reference key="1">
    <citation type="journal article" date="1991" name="DNA Seq.">
        <title>Nucleotide sequence and organization of genes flanking the transfer origin of promiscuous plasmid RP4.</title>
        <authorList>
            <person name="Ziegelin G."/>
            <person name="Pansegrau W."/>
            <person name="Strack B."/>
            <person name="Balzer D."/>
            <person name="Kroeger M."/>
            <person name="Kruft V."/>
            <person name="Lanka E."/>
        </authorList>
    </citation>
    <scope>NUCLEOTIDE SEQUENCE [GENOMIC DNA]</scope>
    <scope>PROTEIN SEQUENCE OF 2-8</scope>
    <source>
        <strain>ATCC 33694 / HB101</strain>
    </source>
</reference>
<keyword id="KW-0184">Conjugation</keyword>
<keyword id="KW-0903">Direct protein sequencing</keyword>
<keyword id="KW-0614">Plasmid</keyword>
<organism>
    <name type="scientific">Escherichia coli</name>
    <dbReference type="NCBI Taxonomy" id="562"/>
    <lineage>
        <taxon>Bacteria</taxon>
        <taxon>Pseudomonadati</taxon>
        <taxon>Pseudomonadota</taxon>
        <taxon>Gammaproteobacteria</taxon>
        <taxon>Enterobacterales</taxon>
        <taxon>Enterobacteriaceae</taxon>
        <taxon>Escherichia</taxon>
    </lineage>
</organism>
<sequence length="145" mass="15563">MSDQIEELIREIAAKHGIAVGRDDPVLILHTINARLMADSAAKQEEILAAFKEELEGIAHRWGEDAKAKAERMLNAALAASKDAMAKVMKDSAAQAAEAIRREIDDGLGRQLAAKVADARRVAMMNMIAGGMVLFAAALVVWASL</sequence>
<name>TRAM4_ECOLX</name>
<feature type="initiator methionine" description="Removed" evidence="1">
    <location>
        <position position="1"/>
    </location>
</feature>
<feature type="chain" id="PRO_0000068602" description="Protein TraM">
    <location>
        <begin position="2"/>
        <end position="145"/>
    </location>
</feature>
<dbReference type="EMBL" id="X54459">
    <property type="protein sequence ID" value="CAA38341.1"/>
    <property type="molecule type" value="Genomic_DNA"/>
</dbReference>
<dbReference type="PIR" id="S23005">
    <property type="entry name" value="S23005"/>
</dbReference>
<dbReference type="RefSeq" id="WP_011205822.1">
    <property type="nucleotide sequence ID" value="NZ_VMTS01000048.1"/>
</dbReference>
<dbReference type="SMR" id="Q00186"/>
<dbReference type="GO" id="GO:0009372">
    <property type="term" value="P:quorum sensing"/>
    <property type="evidence" value="ECO:0007669"/>
    <property type="project" value="InterPro"/>
</dbReference>
<dbReference type="InterPro" id="IPR028140">
    <property type="entry name" value="TraM"/>
</dbReference>
<dbReference type="NCBIfam" id="NF010470">
    <property type="entry name" value="PRK13895.1"/>
    <property type="match status" value="1"/>
</dbReference>
<dbReference type="Pfam" id="PF11657">
    <property type="entry name" value="Activator-TraM"/>
    <property type="match status" value="1"/>
</dbReference>
<accession>Q00186</accession>